<keyword id="KW-0903">Direct protein sequencing</keyword>
<keyword id="KW-1015">Disulfide bond</keyword>
<keyword id="KW-0646">Protease inhibitor</keyword>
<keyword id="KW-0964">Secreted</keyword>
<keyword id="KW-0732">Signal</keyword>
<comment type="function">
    <text evidence="1">Endoparasitoid venom protein that interferes with the activation of host hemolymph prophenoloxidase. May act in conjunction with other venom proteins (such as Vn50), by competitive binding to the zymogen and thereby interrupting the enzyme.</text>
</comment>
<comment type="subcellular location">
    <subcellularLocation>
        <location evidence="1">Secreted</location>
    </subcellularLocation>
</comment>
<comment type="tissue specificity">
    <text evidence="1">Expressed by the venom gland.</text>
</comment>
<comment type="PTM">
    <text>Contains 2 disulfide bonds.</text>
</comment>
<comment type="mass spectrometry">
    <text>Oxidized mass.</text>
</comment>
<comment type="mass spectrometry">
    <text>Reduced mass.</text>
</comment>
<comment type="miscellaneous">
    <text>This species is an endoparasitoid, that contain symbiotic polydnaviruses (PDV) in its genome. PDVs, used to overcome the host defenses, are introduced into the body of the host larva at oviposition by the female wasp and have been shown to be essential for successful parasitism and development of the parasitoid inside the host. Interestingly, the coding region for Vn4.6 is located in the opposite direction upstream of a gene coding for a C.rubecula PDV structural protein (Crp32).</text>
</comment>
<protein>
    <recommendedName>
        <fullName>Venom protein Vn4.6</fullName>
    </recommendedName>
</protein>
<name>VN46_COTRU</name>
<sequence>MSKIILAIFLIVLCGLIFVTVDAMIDAPCKDNDDCDRFTEYCAIYADENGNEAGKRCEDAIGLLV</sequence>
<evidence type="ECO:0000269" key="1">
    <source>
    </source>
</evidence>
<dbReference type="EMBL" id="AY069984">
    <property type="protein sequence ID" value="AAL58518.2"/>
    <property type="molecule type" value="mRNA"/>
</dbReference>
<dbReference type="SMR" id="Q8WQK0"/>
<dbReference type="GO" id="GO:0005576">
    <property type="term" value="C:extracellular region"/>
    <property type="evidence" value="ECO:0007669"/>
    <property type="project" value="UniProtKB-SubCell"/>
</dbReference>
<dbReference type="GO" id="GO:0030414">
    <property type="term" value="F:peptidase inhibitor activity"/>
    <property type="evidence" value="ECO:0007669"/>
    <property type="project" value="UniProtKB-KW"/>
</dbReference>
<accession>Q8WQK0</accession>
<organism>
    <name type="scientific">Cotesia rubecula</name>
    <name type="common">Cabbage white butterfly parasite</name>
    <name type="synonym">Apanteles rubecula</name>
    <dbReference type="NCBI Taxonomy" id="32392"/>
    <lineage>
        <taxon>Eukaryota</taxon>
        <taxon>Metazoa</taxon>
        <taxon>Ecdysozoa</taxon>
        <taxon>Arthropoda</taxon>
        <taxon>Hexapoda</taxon>
        <taxon>Insecta</taxon>
        <taxon>Pterygota</taxon>
        <taxon>Neoptera</taxon>
        <taxon>Endopterygota</taxon>
        <taxon>Hymenoptera</taxon>
        <taxon>Apocrita</taxon>
        <taxon>Ichneumonoidea</taxon>
        <taxon>Braconidae</taxon>
        <taxon>Microgastrinae</taxon>
        <taxon>Cotesia</taxon>
    </lineage>
</organism>
<proteinExistence type="evidence at protein level"/>
<reference key="1">
    <citation type="journal article" date="2003" name="Arch. Insect Biochem. Physiol.">
        <title>Isolation and characterization of a novel venom protein from an endoparasitoid, Cotesia rubecula (Hym: Braconidae).</title>
        <authorList>
            <person name="Asgari S."/>
            <person name="Zareie R."/>
            <person name="Zhang G."/>
            <person name="Schmidt O."/>
        </authorList>
    </citation>
    <scope>NUCLEOTIDE SEQUENCE [MRNA]</scope>
    <scope>PROTEIN SEQUENCE OF 24-59</scope>
    <scope>FUNCTION</scope>
    <scope>SUBCELLULAR LOCATION</scope>
    <scope>TISSUE SPECIFICITY</scope>
    <scope>MASS SPECTROMETRY</scope>
    <source>
        <tissue>Venom</tissue>
        <tissue>Venom gland</tissue>
    </source>
</reference>
<feature type="signal peptide" evidence="1">
    <location>
        <begin position="1"/>
        <end position="23"/>
    </location>
</feature>
<feature type="chain" id="PRO_0000401919" description="Venom protein Vn4.6">
    <location>
        <begin position="24"/>
        <end position="65"/>
    </location>
</feature>